<gene>
    <name evidence="1" type="primary">rpsI</name>
    <name type="ordered locus">Dvul_0725</name>
</gene>
<feature type="chain" id="PRO_1000051218" description="Small ribosomal subunit protein uS9">
    <location>
        <begin position="1"/>
        <end position="130"/>
    </location>
</feature>
<keyword id="KW-0687">Ribonucleoprotein</keyword>
<keyword id="KW-0689">Ribosomal protein</keyword>
<reference key="1">
    <citation type="journal article" date="2009" name="Environ. Microbiol.">
        <title>Contribution of mobile genetic elements to Desulfovibrio vulgaris genome plasticity.</title>
        <authorList>
            <person name="Walker C.B."/>
            <person name="Stolyar S."/>
            <person name="Chivian D."/>
            <person name="Pinel N."/>
            <person name="Gabster J.A."/>
            <person name="Dehal P.S."/>
            <person name="He Z."/>
            <person name="Yang Z.K."/>
            <person name="Yen H.C."/>
            <person name="Zhou J."/>
            <person name="Wall J.D."/>
            <person name="Hazen T.C."/>
            <person name="Arkin A.P."/>
            <person name="Stahl D.A."/>
        </authorList>
    </citation>
    <scope>NUCLEOTIDE SEQUENCE [LARGE SCALE GENOMIC DNA]</scope>
    <source>
        <strain>DP4</strain>
    </source>
</reference>
<accession>A1VBD2</accession>
<organism>
    <name type="scientific">Nitratidesulfovibrio vulgaris (strain DP4)</name>
    <name type="common">Desulfovibrio vulgaris</name>
    <dbReference type="NCBI Taxonomy" id="391774"/>
    <lineage>
        <taxon>Bacteria</taxon>
        <taxon>Pseudomonadati</taxon>
        <taxon>Thermodesulfobacteriota</taxon>
        <taxon>Desulfovibrionia</taxon>
        <taxon>Desulfovibrionales</taxon>
        <taxon>Desulfovibrionaceae</taxon>
        <taxon>Nitratidesulfovibrio</taxon>
    </lineage>
</organism>
<comment type="similarity">
    <text evidence="1">Belongs to the universal ribosomal protein uS9 family.</text>
</comment>
<proteinExistence type="inferred from homology"/>
<sequence>MTKEFNYGTGRRKTATARTRLYPGTGVIEINGRPYEEFFPRKTLQMIIRQPLVLTKMLEKFDVKVNVAGGGISGQAEAVRHGISRALLELDAELRPVLKRAGFLTRDARKKERKKYGLRAARARYQYSKR</sequence>
<protein>
    <recommendedName>
        <fullName evidence="1">Small ribosomal subunit protein uS9</fullName>
    </recommendedName>
    <alternativeName>
        <fullName evidence="2">30S ribosomal protein S9</fullName>
    </alternativeName>
</protein>
<name>RS9_NITV4</name>
<dbReference type="EMBL" id="CP000527">
    <property type="protein sequence ID" value="ABM27748.1"/>
    <property type="molecule type" value="Genomic_DNA"/>
</dbReference>
<dbReference type="RefSeq" id="WP_010939789.1">
    <property type="nucleotide sequence ID" value="NC_008751.1"/>
</dbReference>
<dbReference type="SMR" id="A1VBD2"/>
<dbReference type="KEGG" id="dvl:Dvul_0725"/>
<dbReference type="HOGENOM" id="CLU_046483_2_1_7"/>
<dbReference type="Proteomes" id="UP000009173">
    <property type="component" value="Chromosome"/>
</dbReference>
<dbReference type="GO" id="GO:0022627">
    <property type="term" value="C:cytosolic small ribosomal subunit"/>
    <property type="evidence" value="ECO:0007669"/>
    <property type="project" value="TreeGrafter"/>
</dbReference>
<dbReference type="GO" id="GO:0003723">
    <property type="term" value="F:RNA binding"/>
    <property type="evidence" value="ECO:0007669"/>
    <property type="project" value="TreeGrafter"/>
</dbReference>
<dbReference type="GO" id="GO:0003735">
    <property type="term" value="F:structural constituent of ribosome"/>
    <property type="evidence" value="ECO:0007669"/>
    <property type="project" value="InterPro"/>
</dbReference>
<dbReference type="GO" id="GO:0006412">
    <property type="term" value="P:translation"/>
    <property type="evidence" value="ECO:0007669"/>
    <property type="project" value="UniProtKB-UniRule"/>
</dbReference>
<dbReference type="FunFam" id="3.30.230.10:FF:000001">
    <property type="entry name" value="30S ribosomal protein S9"/>
    <property type="match status" value="1"/>
</dbReference>
<dbReference type="Gene3D" id="3.30.230.10">
    <property type="match status" value="1"/>
</dbReference>
<dbReference type="HAMAP" id="MF_00532_B">
    <property type="entry name" value="Ribosomal_uS9_B"/>
    <property type="match status" value="1"/>
</dbReference>
<dbReference type="InterPro" id="IPR020568">
    <property type="entry name" value="Ribosomal_Su5_D2-typ_SF"/>
</dbReference>
<dbReference type="InterPro" id="IPR000754">
    <property type="entry name" value="Ribosomal_uS9"/>
</dbReference>
<dbReference type="InterPro" id="IPR023035">
    <property type="entry name" value="Ribosomal_uS9_bac/plastid"/>
</dbReference>
<dbReference type="InterPro" id="IPR020574">
    <property type="entry name" value="Ribosomal_uS9_CS"/>
</dbReference>
<dbReference type="InterPro" id="IPR014721">
    <property type="entry name" value="Ribsml_uS5_D2-typ_fold_subgr"/>
</dbReference>
<dbReference type="NCBIfam" id="NF001099">
    <property type="entry name" value="PRK00132.1"/>
    <property type="match status" value="1"/>
</dbReference>
<dbReference type="PANTHER" id="PTHR21569">
    <property type="entry name" value="RIBOSOMAL PROTEIN S9"/>
    <property type="match status" value="1"/>
</dbReference>
<dbReference type="PANTHER" id="PTHR21569:SF1">
    <property type="entry name" value="SMALL RIBOSOMAL SUBUNIT PROTEIN US9M"/>
    <property type="match status" value="1"/>
</dbReference>
<dbReference type="Pfam" id="PF00380">
    <property type="entry name" value="Ribosomal_S9"/>
    <property type="match status" value="1"/>
</dbReference>
<dbReference type="SUPFAM" id="SSF54211">
    <property type="entry name" value="Ribosomal protein S5 domain 2-like"/>
    <property type="match status" value="1"/>
</dbReference>
<dbReference type="PROSITE" id="PS00360">
    <property type="entry name" value="RIBOSOMAL_S9"/>
    <property type="match status" value="1"/>
</dbReference>
<evidence type="ECO:0000255" key="1">
    <source>
        <dbReference type="HAMAP-Rule" id="MF_00532"/>
    </source>
</evidence>
<evidence type="ECO:0000305" key="2"/>